<accession>A0A0D1DT65</accession>
<gene>
    <name evidence="4" type="primary">orf1</name>
    <name type="ORF">UMAG_06464</name>
</gene>
<name>ORF1_MYCMD</name>
<protein>
    <recommendedName>
        <fullName evidence="5">Probable alcohol acetyltransferase orf1</fullName>
        <ecNumber evidence="6">2.3.1.-</ecNumber>
    </recommendedName>
    <alternativeName>
        <fullName evidence="4">Ustilagic acid biosynthesis cluster protein orf1</fullName>
    </alternativeName>
</protein>
<feature type="chain" id="PRO_0000452765" description="Probable alcohol acetyltransferase orf1">
    <location>
        <begin position="1"/>
        <end position="429"/>
    </location>
</feature>
<comment type="function">
    <text evidence="1 2 6">Probable alcohol acetyltransferase; part of the gene cluster that mediates the biosynthesis of the glycolipid biosurfactant ustilagic acid (UA) (PubMed:15932999, PubMed:17850255). UA is a secreted cellobiose glycolipid that is toxic for many microorganisms and confers biocontrol activity to U.maydis (PubMed:15932999, PubMed:17850255). UA consists of 15,16-dihydroxypalmitic or 2,15,16-trihydroxypalmitic acid, which is O-glycosidically linked to cellobiose at its terminal hydroxyl group (PubMed:17850255). In addition, the cellobiose moiety is acetylated and acylated with a short-chain hydroxy fatty acid (PubMed:17850255). UA biosynthesis starts with omega-hydroxylation of palmitic acid catalyzed by the cytochrome P450 monooxygenase cyp1 (PubMed:17850255). Terminal hydroxylation of palmitic acid precedes subterminal hydroxylation catalyzed by the cytochrome P450 monooxygenase cyp2 (PubMed:17850255). Sequential glucosylation of the hydroxy fatty acid is probably catalyzed by the glycosyltransferase ugt1 (Probable). The cellobiose lipid is further decorated by acetylation of the proximal glucose residue and by acylation with a short-chain beta-hydroxy fatty acid at the distal glucose residue (Probable). The acyltransferase uat1 may be a good candidate for catalyzing either acetylation or acylation of the cellobiose lipid (Probable). The fatty acid synthase fas2 may be involved in synthesis of the carbon backbone of the short-chain beta-hydroxy fatty acid esterified to the cellobiose disaccharide (Probable). The secreted UA consists of a mixture of both alpha-hydroxylated and non-hydroxylated glycolipids; therefore, alpha-hydroxylation of the long-chain fatty, catalyzed by the fatty acid hydroxylase ahd1, occurs late in UA biosynthesis and may be the last step before secretion (PubMed:17850255).</text>
</comment>
<comment type="pathway">
    <text evidence="6">Secondary metabolite biosynthesis.</text>
</comment>
<comment type="induction">
    <text evidence="2 3">Expression is strongly induced under conditions of nitrogen starvation (PubMed:17850255). Expression is positively regulated by the cluster-specific transcription factor rua1 that recognizes and binds to the specific 5'-T/G-G/T-C-G-C-A-T-A/T-C/T-C/T-G/A-3' upstream activating sequence found in all promoters of the UA biosynthesis genes (PubMed:20173069).</text>
</comment>
<comment type="similarity">
    <text evidence="5">Belongs to the alcohol acetyltransferase FCK4 family.</text>
</comment>
<proteinExistence type="evidence at transcript level"/>
<sequence length="429" mass="47532">MPSRIPSSNDPVLPGRELWGTERFWHFAHHEHQGAFDMVSIFVVDVGSRHLSIEDWRKAWSKLYRTFAVLSQKISDDSGEGKIVDGALRAEESFFTGPILQDDQDRIDYSLQQRRFDCLSLTVFATSGTEHESFHLAISNPHALGDAKGIFAIGKALIQGVLSQTQAELQSPTSPPPQPSLKAFTTSHNQDLGLKAMFEVARTGSSIGFPILPKETSAELEPASREWRRVFTFSPAQTETLVQLCKAKALTVSAWLQATILHALIDTLVDDKGDEKAEQTFTVAAMPFHSPLSVSGATSTIFAPISIRVGSKAELNDIAEAVAESFGLARRFAEDVQDDYVKTLLKLFGSVRLETSVPTFSSLGRLDTVTGLKRYHVVARNNLPTTGIHAWTLNDQLNLTLSWAPARFRRDHIEKFWSTWIGTIKEVVA</sequence>
<organism>
    <name type="scientific">Mycosarcoma maydis</name>
    <name type="common">Corn smut fungus</name>
    <name type="synonym">Ustilago maydis</name>
    <dbReference type="NCBI Taxonomy" id="5270"/>
    <lineage>
        <taxon>Eukaryota</taxon>
        <taxon>Fungi</taxon>
        <taxon>Dikarya</taxon>
        <taxon>Basidiomycota</taxon>
        <taxon>Ustilaginomycotina</taxon>
        <taxon>Ustilaginomycetes</taxon>
        <taxon>Ustilaginales</taxon>
        <taxon>Ustilaginaceae</taxon>
        <taxon>Mycosarcoma</taxon>
    </lineage>
</organism>
<dbReference type="EC" id="2.3.1.-" evidence="6"/>
<dbReference type="EMBL" id="CM003162">
    <property type="protein sequence ID" value="KIS65760.1"/>
    <property type="molecule type" value="Genomic_DNA"/>
</dbReference>
<dbReference type="RefSeq" id="XP_011392731.1">
    <property type="nucleotide sequence ID" value="XM_011394429.1"/>
</dbReference>
<dbReference type="SMR" id="A0A0D1DT65"/>
<dbReference type="EnsemblFungi" id="KIS65760">
    <property type="protein sequence ID" value="KIS65760"/>
    <property type="gene ID" value="UMAG_06464"/>
</dbReference>
<dbReference type="GeneID" id="23566045"/>
<dbReference type="KEGG" id="uma:UMAG_06464"/>
<dbReference type="VEuPathDB" id="FungiDB:UMAG_06464"/>
<dbReference type="InParanoid" id="A0A0D1DT65"/>
<dbReference type="OrthoDB" id="2555907at2759"/>
<dbReference type="Proteomes" id="UP000000561">
    <property type="component" value="Chromosome 23"/>
</dbReference>
<dbReference type="GO" id="GO:0016740">
    <property type="term" value="F:transferase activity"/>
    <property type="evidence" value="ECO:0007669"/>
    <property type="project" value="UniProtKB-KW"/>
</dbReference>
<dbReference type="Gene3D" id="3.30.559.10">
    <property type="entry name" value="Chloramphenicol acetyltransferase-like domain"/>
    <property type="match status" value="1"/>
</dbReference>
<dbReference type="Gene3D" id="3.30.559.30">
    <property type="entry name" value="Nonribosomal peptide synthetase, condensation domain"/>
    <property type="match status" value="1"/>
</dbReference>
<dbReference type="InterPro" id="IPR023213">
    <property type="entry name" value="CAT-like_dom_sf"/>
</dbReference>
<evidence type="ECO:0000269" key="1">
    <source>
    </source>
</evidence>
<evidence type="ECO:0000269" key="2">
    <source>
    </source>
</evidence>
<evidence type="ECO:0000269" key="3">
    <source>
    </source>
</evidence>
<evidence type="ECO:0000303" key="4">
    <source>
    </source>
</evidence>
<evidence type="ECO:0000305" key="5"/>
<evidence type="ECO:0000305" key="6">
    <source>
    </source>
</evidence>
<reference key="1">
    <citation type="journal article" date="2006" name="Nature">
        <title>Insights from the genome of the biotrophic fungal plant pathogen Ustilago maydis.</title>
        <authorList>
            <person name="Kaemper J."/>
            <person name="Kahmann R."/>
            <person name="Boelker M."/>
            <person name="Ma L.-J."/>
            <person name="Brefort T."/>
            <person name="Saville B.J."/>
            <person name="Banuett F."/>
            <person name="Kronstad J.W."/>
            <person name="Gold S.E."/>
            <person name="Mueller O."/>
            <person name="Perlin M.H."/>
            <person name="Woesten H.A.B."/>
            <person name="de Vries R."/>
            <person name="Ruiz-Herrera J."/>
            <person name="Reynaga-Pena C.G."/>
            <person name="Snetselaar K."/>
            <person name="McCann M."/>
            <person name="Perez-Martin J."/>
            <person name="Feldbruegge M."/>
            <person name="Basse C.W."/>
            <person name="Steinberg G."/>
            <person name="Ibeas J.I."/>
            <person name="Holloman W."/>
            <person name="Guzman P."/>
            <person name="Farman M.L."/>
            <person name="Stajich J.E."/>
            <person name="Sentandreu R."/>
            <person name="Gonzalez-Prieto J.M."/>
            <person name="Kennell J.C."/>
            <person name="Molina L."/>
            <person name="Schirawski J."/>
            <person name="Mendoza-Mendoza A."/>
            <person name="Greilinger D."/>
            <person name="Muench K."/>
            <person name="Roessel N."/>
            <person name="Scherer M."/>
            <person name="Vranes M."/>
            <person name="Ladendorf O."/>
            <person name="Vincon V."/>
            <person name="Fuchs U."/>
            <person name="Sandrock B."/>
            <person name="Meng S."/>
            <person name="Ho E.C.H."/>
            <person name="Cahill M.J."/>
            <person name="Boyce K.J."/>
            <person name="Klose J."/>
            <person name="Klosterman S.J."/>
            <person name="Deelstra H.J."/>
            <person name="Ortiz-Castellanos L."/>
            <person name="Li W."/>
            <person name="Sanchez-Alonso P."/>
            <person name="Schreier P.H."/>
            <person name="Haeuser-Hahn I."/>
            <person name="Vaupel M."/>
            <person name="Koopmann E."/>
            <person name="Friedrich G."/>
            <person name="Voss H."/>
            <person name="Schlueter T."/>
            <person name="Margolis J."/>
            <person name="Platt D."/>
            <person name="Swimmer C."/>
            <person name="Gnirke A."/>
            <person name="Chen F."/>
            <person name="Vysotskaia V."/>
            <person name="Mannhaupt G."/>
            <person name="Gueldener U."/>
            <person name="Muensterkoetter M."/>
            <person name="Haase D."/>
            <person name="Oesterheld M."/>
            <person name="Mewes H.-W."/>
            <person name="Mauceli E.W."/>
            <person name="DeCaprio D."/>
            <person name="Wade C.M."/>
            <person name="Butler J."/>
            <person name="Young S.K."/>
            <person name="Jaffe D.B."/>
            <person name="Calvo S.E."/>
            <person name="Nusbaum C."/>
            <person name="Galagan J.E."/>
            <person name="Birren B.W."/>
        </authorList>
    </citation>
    <scope>NUCLEOTIDE SEQUENCE [LARGE SCALE GENOMIC DNA]</scope>
    <source>
        <strain>DSM 14603 / FGSC 9021 / UM521</strain>
    </source>
</reference>
<reference key="2">
    <citation type="submission" date="2014-09" db="EMBL/GenBank/DDBJ databases">
        <authorList>
            <person name="Gueldener U."/>
            <person name="Muensterkoetter M."/>
            <person name="Walter M.C."/>
            <person name="Mannhaupt G."/>
            <person name="Kahmann R."/>
        </authorList>
    </citation>
    <scope>GENOME REANNOTATION</scope>
    <source>
        <strain>DSM 14603 / FGSC 9021 / UM521</strain>
    </source>
</reference>
<reference key="3">
    <citation type="journal article" date="2005" name="Appl. Environ. Microbiol.">
        <title>Genetic analysis of biosurfactant production in Ustilago maydis.</title>
        <authorList>
            <person name="Hewald S."/>
            <person name="Josephs K."/>
            <person name="Boelker M."/>
        </authorList>
    </citation>
    <scope>FUNCTION</scope>
</reference>
<reference key="4">
    <citation type="journal article" date="2007" name="Mol. Microbiol.">
        <title>A biosynthetic gene cluster for a secreted cellobiose lipid with antifungal activity from Ustilago maydis.</title>
        <authorList>
            <person name="Teichmann B."/>
            <person name="Linne U."/>
            <person name="Hewald S."/>
            <person name="Marahiel M.A."/>
            <person name="Boelker M."/>
        </authorList>
    </citation>
    <scope>FUNCTION</scope>
    <scope>INDUCTION</scope>
    <scope>PATHWAY</scope>
</reference>
<reference key="5">
    <citation type="journal article" date="2010" name="Appl. Environ. Microbiol.">
        <title>Activation of the ustilagic acid biosynthesis gene cluster in Ustilago maydis by the C2H2 zinc finger transcription factor Rua1.</title>
        <authorList>
            <person name="Teichmann B."/>
            <person name="Liu L."/>
            <person name="Schink K.O."/>
            <person name="Boelker M."/>
        </authorList>
    </citation>
    <scope>INDUCTION</scope>
</reference>
<keyword id="KW-1185">Reference proteome</keyword>
<keyword id="KW-0808">Transferase</keyword>